<feature type="chain" id="PRO_0000423626" description="Protein SNOWY COTYLEDON 3">
    <location>
        <begin position="1"/>
        <end position="644"/>
    </location>
</feature>
<feature type="region of interest" description="Disordered" evidence="1">
    <location>
        <begin position="1"/>
        <end position="129"/>
    </location>
</feature>
<feature type="region of interest" description="Disordered" evidence="1">
    <location>
        <begin position="162"/>
        <end position="252"/>
    </location>
</feature>
<feature type="region of interest" description="Disordered" evidence="1">
    <location>
        <begin position="290"/>
        <end position="414"/>
    </location>
</feature>
<feature type="short sequence motif" description="QWRF motif">
    <location>
        <begin position="463"/>
        <end position="466"/>
    </location>
</feature>
<feature type="compositionally biased region" description="Low complexity" evidence="1">
    <location>
        <begin position="53"/>
        <end position="77"/>
    </location>
</feature>
<feature type="compositionally biased region" description="Polar residues" evidence="1">
    <location>
        <begin position="91"/>
        <end position="112"/>
    </location>
</feature>
<feature type="compositionally biased region" description="Basic and acidic residues" evidence="1">
    <location>
        <begin position="172"/>
        <end position="190"/>
    </location>
</feature>
<feature type="compositionally biased region" description="Polar residues" evidence="1">
    <location>
        <begin position="290"/>
        <end position="302"/>
    </location>
</feature>
<feature type="compositionally biased region" description="Polar residues" evidence="1">
    <location>
        <begin position="314"/>
        <end position="332"/>
    </location>
</feature>
<feature type="compositionally biased region" description="Low complexity" evidence="1">
    <location>
        <begin position="343"/>
        <end position="370"/>
    </location>
</feature>
<feature type="compositionally biased region" description="Low complexity" evidence="1">
    <location>
        <begin position="397"/>
        <end position="412"/>
    </location>
</feature>
<feature type="splice variant" id="VSP_053219" description="In isoform 2." evidence="3">
    <original>VAAM</original>
    <variation>HASC</variation>
    <location>
        <begin position="624"/>
        <end position="627"/>
    </location>
</feature>
<feature type="splice variant" id="VSP_053220" description="In isoform 2." evidence="3">
    <location>
        <begin position="628"/>
        <end position="644"/>
    </location>
</feature>
<feature type="mutagenesis site" description="In sco3-1; chlorotic cotyledons with impaired chloroplast and etioplast development." evidence="2">
    <original>G</original>
    <variation>E</variation>
    <location>
        <position position="8"/>
    </location>
</feature>
<keyword id="KW-0025">Alternative splicing</keyword>
<keyword id="KW-0576">Peroxisome</keyword>
<keyword id="KW-1185">Reference proteome</keyword>
<accession>Q8GXD9</accession>
<accession>Q3EB40</accession>
<accession>Q9LJN9</accession>
<dbReference type="EMBL" id="AP000417">
    <property type="protein sequence ID" value="BAB02541.1"/>
    <property type="status" value="ALT_SEQ"/>
    <property type="molecule type" value="Genomic_DNA"/>
</dbReference>
<dbReference type="EMBL" id="CP002686">
    <property type="protein sequence ID" value="AEE76259.1"/>
    <property type="molecule type" value="Genomic_DNA"/>
</dbReference>
<dbReference type="EMBL" id="CP002686">
    <property type="protein sequence ID" value="AEE76260.1"/>
    <property type="molecule type" value="Genomic_DNA"/>
</dbReference>
<dbReference type="EMBL" id="AK118290">
    <property type="protein sequence ID" value="BAC42908.1"/>
    <property type="molecule type" value="mRNA"/>
</dbReference>
<dbReference type="EMBL" id="BT005534">
    <property type="protein sequence ID" value="AAO63954.1"/>
    <property type="molecule type" value="mRNA"/>
</dbReference>
<dbReference type="PIR" id="T52384">
    <property type="entry name" value="T52384"/>
</dbReference>
<dbReference type="RefSeq" id="NP_188591.2">
    <molecule id="Q8GXD9-2"/>
    <property type="nucleotide sequence ID" value="NM_112847.3"/>
</dbReference>
<dbReference type="RefSeq" id="NP_850614.1">
    <molecule id="Q8GXD9-1"/>
    <property type="nucleotide sequence ID" value="NM_180283.5"/>
</dbReference>
<dbReference type="SMR" id="Q8GXD9"/>
<dbReference type="BioGRID" id="6827">
    <property type="interactions" value="2"/>
</dbReference>
<dbReference type="FunCoup" id="Q8GXD9">
    <property type="interactions" value="1766"/>
</dbReference>
<dbReference type="IntAct" id="Q8GXD9">
    <property type="interactions" value="2"/>
</dbReference>
<dbReference type="STRING" id="3702.Q8GXD9"/>
<dbReference type="iPTMnet" id="Q8GXD9"/>
<dbReference type="PaxDb" id="3702-AT3G19570.2"/>
<dbReference type="ProteomicsDB" id="226604">
    <molecule id="Q8GXD9-1"/>
</dbReference>
<dbReference type="EnsemblPlants" id="AT3G19570.1">
    <molecule id="Q8GXD9-2"/>
    <property type="protein sequence ID" value="AT3G19570.1"/>
    <property type="gene ID" value="AT3G19570"/>
</dbReference>
<dbReference type="EnsemblPlants" id="AT3G19570.2">
    <molecule id="Q8GXD9-1"/>
    <property type="protein sequence ID" value="AT3G19570.2"/>
    <property type="gene ID" value="AT3G19570"/>
</dbReference>
<dbReference type="GeneID" id="821494"/>
<dbReference type="Gramene" id="AT3G19570.1">
    <molecule id="Q8GXD9-2"/>
    <property type="protein sequence ID" value="AT3G19570.1"/>
    <property type="gene ID" value="AT3G19570"/>
</dbReference>
<dbReference type="Gramene" id="AT3G19570.2">
    <molecule id="Q8GXD9-1"/>
    <property type="protein sequence ID" value="AT3G19570.2"/>
    <property type="gene ID" value="AT3G19570"/>
</dbReference>
<dbReference type="KEGG" id="ath:AT3G19570"/>
<dbReference type="Araport" id="AT3G19570"/>
<dbReference type="TAIR" id="AT3G19570">
    <property type="gene designation" value="SCO3"/>
</dbReference>
<dbReference type="eggNOG" id="ENOG502QYE5">
    <property type="taxonomic scope" value="Eukaryota"/>
</dbReference>
<dbReference type="InParanoid" id="Q8GXD9"/>
<dbReference type="PhylomeDB" id="Q8GXD9"/>
<dbReference type="PRO" id="PR:Q8GXD9"/>
<dbReference type="Proteomes" id="UP000006548">
    <property type="component" value="Chromosome 3"/>
</dbReference>
<dbReference type="ExpressionAtlas" id="Q8GXD9">
    <property type="expression patterns" value="baseline and differential"/>
</dbReference>
<dbReference type="GO" id="GO:0005874">
    <property type="term" value="C:microtubule"/>
    <property type="evidence" value="ECO:0000314"/>
    <property type="project" value="TAIR"/>
</dbReference>
<dbReference type="GO" id="GO:0005777">
    <property type="term" value="C:peroxisome"/>
    <property type="evidence" value="ECO:0000314"/>
    <property type="project" value="TAIR"/>
</dbReference>
<dbReference type="GO" id="GO:0009658">
    <property type="term" value="P:chloroplast organization"/>
    <property type="evidence" value="ECO:0000315"/>
    <property type="project" value="TAIR"/>
</dbReference>
<dbReference type="InterPro" id="IPR007573">
    <property type="entry name" value="QWRF"/>
</dbReference>
<dbReference type="PANTHER" id="PTHR31807">
    <property type="entry name" value="AUGMIN FAMILY MEMBER"/>
    <property type="match status" value="1"/>
</dbReference>
<dbReference type="PANTHER" id="PTHR31807:SF2">
    <property type="entry name" value="PROTEIN SNOWY COTYLEDON 3"/>
    <property type="match status" value="1"/>
</dbReference>
<dbReference type="Pfam" id="PF04484">
    <property type="entry name" value="QWRF"/>
    <property type="match status" value="1"/>
</dbReference>
<reference key="1">
    <citation type="journal article" date="2000" name="DNA Res.">
        <title>Structural analysis of Arabidopsis thaliana chromosome 3. II. Sequence features of the 4,251,695 bp regions covered by 90 P1, TAC and BAC clones.</title>
        <authorList>
            <person name="Kaneko T."/>
            <person name="Katoh T."/>
            <person name="Sato S."/>
            <person name="Nakamura Y."/>
            <person name="Asamizu E."/>
            <person name="Tabata S."/>
        </authorList>
    </citation>
    <scope>NUCLEOTIDE SEQUENCE [LARGE SCALE GENOMIC DNA]</scope>
    <source>
        <strain>cv. Columbia</strain>
    </source>
</reference>
<reference key="2">
    <citation type="journal article" date="2017" name="Plant J.">
        <title>Araport11: a complete reannotation of the Arabidopsis thaliana reference genome.</title>
        <authorList>
            <person name="Cheng C.Y."/>
            <person name="Krishnakumar V."/>
            <person name="Chan A.P."/>
            <person name="Thibaud-Nissen F."/>
            <person name="Schobel S."/>
            <person name="Town C.D."/>
        </authorList>
    </citation>
    <scope>GENOME REANNOTATION</scope>
    <source>
        <strain>cv. Columbia</strain>
    </source>
</reference>
<reference key="3">
    <citation type="journal article" date="2002" name="Science">
        <title>Functional annotation of a full-length Arabidopsis cDNA collection.</title>
        <authorList>
            <person name="Seki M."/>
            <person name="Narusaka M."/>
            <person name="Kamiya A."/>
            <person name="Ishida J."/>
            <person name="Satou M."/>
            <person name="Sakurai T."/>
            <person name="Nakajima M."/>
            <person name="Enju A."/>
            <person name="Akiyama K."/>
            <person name="Oono Y."/>
            <person name="Muramatsu M."/>
            <person name="Hayashizaki Y."/>
            <person name="Kawai J."/>
            <person name="Carninci P."/>
            <person name="Itoh M."/>
            <person name="Ishii Y."/>
            <person name="Arakawa T."/>
            <person name="Shibata K."/>
            <person name="Shinagawa A."/>
            <person name="Shinozaki K."/>
        </authorList>
    </citation>
    <scope>NUCLEOTIDE SEQUENCE [LARGE SCALE MRNA] (ISOFORM 1)</scope>
    <source>
        <strain>cv. Columbia</strain>
    </source>
</reference>
<reference key="4">
    <citation type="journal article" date="2003" name="Science">
        <title>Empirical analysis of transcriptional activity in the Arabidopsis genome.</title>
        <authorList>
            <person name="Yamada K."/>
            <person name="Lim J."/>
            <person name="Dale J.M."/>
            <person name="Chen H."/>
            <person name="Shinn P."/>
            <person name="Palm C.J."/>
            <person name="Southwick A.M."/>
            <person name="Wu H.C."/>
            <person name="Kim C.J."/>
            <person name="Nguyen M."/>
            <person name="Pham P.K."/>
            <person name="Cheuk R.F."/>
            <person name="Karlin-Newmann G."/>
            <person name="Liu S.X."/>
            <person name="Lam B."/>
            <person name="Sakano H."/>
            <person name="Wu T."/>
            <person name="Yu G."/>
            <person name="Miranda M."/>
            <person name="Quach H.L."/>
            <person name="Tripp M."/>
            <person name="Chang C.H."/>
            <person name="Lee J.M."/>
            <person name="Toriumi M.J."/>
            <person name="Chan M.M."/>
            <person name="Tang C.C."/>
            <person name="Onodera C.S."/>
            <person name="Deng J.M."/>
            <person name="Akiyama K."/>
            <person name="Ansari Y."/>
            <person name="Arakawa T."/>
            <person name="Banh J."/>
            <person name="Banno F."/>
            <person name="Bowser L."/>
            <person name="Brooks S.Y."/>
            <person name="Carninci P."/>
            <person name="Chao Q."/>
            <person name="Choy N."/>
            <person name="Enju A."/>
            <person name="Goldsmith A.D."/>
            <person name="Gurjal M."/>
            <person name="Hansen N.F."/>
            <person name="Hayashizaki Y."/>
            <person name="Johnson-Hopson C."/>
            <person name="Hsuan V.W."/>
            <person name="Iida K."/>
            <person name="Karnes M."/>
            <person name="Khan S."/>
            <person name="Koesema E."/>
            <person name="Ishida J."/>
            <person name="Jiang P.X."/>
            <person name="Jones T."/>
            <person name="Kawai J."/>
            <person name="Kamiya A."/>
            <person name="Meyers C."/>
            <person name="Nakajima M."/>
            <person name="Narusaka M."/>
            <person name="Seki M."/>
            <person name="Sakurai T."/>
            <person name="Satou M."/>
            <person name="Tamse R."/>
            <person name="Vaysberg M."/>
            <person name="Wallender E.K."/>
            <person name="Wong C."/>
            <person name="Yamamura Y."/>
            <person name="Yuan S."/>
            <person name="Shinozaki K."/>
            <person name="Davis R.W."/>
            <person name="Theologis A."/>
            <person name="Ecker J.R."/>
        </authorList>
    </citation>
    <scope>NUCLEOTIDE SEQUENCE [LARGE SCALE MRNA] (ISOFORM 1)</scope>
    <source>
        <strain>cv. Columbia</strain>
    </source>
</reference>
<reference key="5">
    <citation type="journal article" date="2010" name="Plant Cell">
        <title>The cytoskeleton and the peroxisomal-targeted snowy cotyledon3 protein are required for chloroplast development in Arabidopsis.</title>
        <authorList>
            <person name="Albrecht V."/>
            <person name="Simkova K."/>
            <person name="Carrie C."/>
            <person name="Delannoy E."/>
            <person name="Giraud E."/>
            <person name="Whelan J."/>
            <person name="Small I.D."/>
            <person name="Apel K."/>
            <person name="Badger M.R."/>
            <person name="Pogson B.J."/>
        </authorList>
    </citation>
    <scope>IDENTIFICATION</scope>
    <scope>MUTAGENESIS OF GLY-8</scope>
    <scope>TISSUE SPECIFICITY</scope>
    <scope>SUBCELLULAR LOCATION</scope>
    <scope>INDUCTION BY NORFLURAZON</scope>
    <scope>DISRUPTION PHENOTYPE</scope>
    <scope>GENE FAMILY</scope>
    <scope>NOMENCLATURE</scope>
    <source>
        <strain>cv. Landsberg erecta</strain>
    </source>
</reference>
<organism>
    <name type="scientific">Arabidopsis thaliana</name>
    <name type="common">Mouse-ear cress</name>
    <dbReference type="NCBI Taxonomy" id="3702"/>
    <lineage>
        <taxon>Eukaryota</taxon>
        <taxon>Viridiplantae</taxon>
        <taxon>Streptophyta</taxon>
        <taxon>Embryophyta</taxon>
        <taxon>Tracheophyta</taxon>
        <taxon>Spermatophyta</taxon>
        <taxon>Magnoliopsida</taxon>
        <taxon>eudicotyledons</taxon>
        <taxon>Gunneridae</taxon>
        <taxon>Pentapetalae</taxon>
        <taxon>rosids</taxon>
        <taxon>malvids</taxon>
        <taxon>Brassicales</taxon>
        <taxon>Brassicaceae</taxon>
        <taxon>Camelineae</taxon>
        <taxon>Arabidopsis</taxon>
    </lineage>
</organism>
<sequence length="644" mass="70365">MVAAIPQGAAISNTDSKNPPPRDRQDKPQLTANNGGLQRRPRAAKNVPSRYLSPSPSHSTTTTTTTATSTSTSSSSSVILRSSKRYPSPLLSRTTNSASNLVYTPSSLPKRSQSVDRRRPSAVSDTRTEMSAATKMLITSTRSLSVSFQGEAFSFPISKKKETATPVSHRKCTPERRRATPVRDQRENSKPVDQQLWPGASRRGSSESVVPNSLSRSVDSDSDDGRKLGSGFVGRSMLQHSQSSRVSGDGRLNLGFVGGDGMLEMRDENKARQSTHPRLASSVSCDFTASDTDSVSSGSTNGAHECGSGEVSKTRSLPRNGMASTKFWQETNSRLRRMQDPGSPQCSSPSSRISSISSKFSQSKRFSSDSPLTSSPRGMTSPIRGATRPASPSKLWATATSAPARTSSSPSRVRNGVSEQMNAYNRTLPSILCFSADIRRGKIGEDRVMDAHLLRLLYNRDLQWRFANARADSTLMVQRLSAEKILWNAWVSISELRHSVTLKRIKLLLMRQKLKLASILKEQMCYLEEWSLLDRNHSNSLSGATEALKASTLRLPVSGKAVVDIQDLKHAVSSAVDVMHAMVSSIFSLTSKVEEMNSVMAEMVNITGKEEVLLEQCQGFLTRVAAMQVTDCSMKTHIIQLSRL</sequence>
<proteinExistence type="evidence at protein level"/>
<comment type="function">
    <text>Probable microtubule-associated peroxisomal protein required for chloroplast biogenesis and for the formation of the prolamellar body and prothylakoids in etioplasts. Not involved in peroxisomal metabolism, including mobilization of storage compounds during germination, fatty acid beta-oxydation or photorespiration.</text>
</comment>
<comment type="subcellular location">
    <subcellularLocation>
        <location evidence="2">Peroxisome</location>
    </subcellularLocation>
    <text>Located at discrete small spots potentially associated with the surface of the peroxisome.</text>
</comment>
<comment type="alternative products">
    <event type="alternative splicing"/>
    <isoform>
        <id>Q8GXD9-1</id>
        <name>1</name>
        <sequence type="displayed"/>
    </isoform>
    <isoform>
        <id>Q8GXD9-2</id>
        <name>2</name>
        <sequence type="described" ref="VSP_053219 VSP_053220"/>
    </isoform>
</comment>
<comment type="tissue specificity">
    <text evidence="2">Expressed in young developing tissues, such as seedlings, roots, flowers, buds and young siliques, and to a lesser extent in mature green tissues.</text>
</comment>
<comment type="induction">
    <text evidence="2">Up-regulated by norflurazon.</text>
</comment>
<comment type="disruption phenotype">
    <text evidence="2">Embryo lethality.</text>
</comment>
<comment type="similarity">
    <text evidence="3">Belongs to the QWRF family.</text>
</comment>
<comment type="sequence caution" evidence="3">
    <conflict type="erroneous gene model prediction">
        <sequence resource="EMBL-CDS" id="BAB02541"/>
    </conflict>
</comment>
<name>SCO3_ARATH</name>
<gene>
    <name type="primary">SCO3</name>
    <name type="synonym">QWRF1</name>
    <name type="ordered locus">At3g19570</name>
    <name type="ORF">MMB12.2</name>
</gene>
<evidence type="ECO:0000256" key="1">
    <source>
        <dbReference type="SAM" id="MobiDB-lite"/>
    </source>
</evidence>
<evidence type="ECO:0000269" key="2">
    <source>
    </source>
</evidence>
<evidence type="ECO:0000305" key="3"/>
<protein>
    <recommendedName>
        <fullName>Protein SNOWY COTYLEDON 3</fullName>
    </recommendedName>
    <alternativeName>
        <fullName>QWRF motif-containing protein 1</fullName>
    </alternativeName>
</protein>